<comment type="function">
    <text evidence="1">NDH-1 shuttles electrons from NADH, via FMN and iron-sulfur (Fe-S) centers, to quinones in the respiratory chain. The immediate electron acceptor for the enzyme in this species is believed to be a menaquinone. Couples the redox reaction to proton translocation (for every two electrons transferred, four hydrogen ions are translocated across the cytoplasmic membrane), and thus conserves the redox energy in a proton gradient.</text>
</comment>
<comment type="catalytic activity">
    <reaction evidence="1">
        <text>a quinone + NADH + 5 H(+)(in) = a quinol + NAD(+) + 4 H(+)(out)</text>
        <dbReference type="Rhea" id="RHEA:57888"/>
        <dbReference type="ChEBI" id="CHEBI:15378"/>
        <dbReference type="ChEBI" id="CHEBI:24646"/>
        <dbReference type="ChEBI" id="CHEBI:57540"/>
        <dbReference type="ChEBI" id="CHEBI:57945"/>
        <dbReference type="ChEBI" id="CHEBI:132124"/>
    </reaction>
</comment>
<comment type="subunit">
    <text evidence="1">NDH-1 is composed of 14 different subunits. Subunits NuoA, H, J, K, L, M, N constitute the membrane sector of the complex.</text>
</comment>
<comment type="subcellular location">
    <subcellularLocation>
        <location evidence="1">Cell membrane</location>
        <topology evidence="1">Multi-pass membrane protein</topology>
    </subcellularLocation>
</comment>
<comment type="similarity">
    <text evidence="1">Belongs to the complex I subunit 2 family.</text>
</comment>
<protein>
    <recommendedName>
        <fullName evidence="1">NADH-quinone oxidoreductase subunit N 1</fullName>
        <ecNumber evidence="1">7.1.1.-</ecNumber>
    </recommendedName>
    <alternativeName>
        <fullName evidence="1">NADH dehydrogenase I subunit N 1</fullName>
    </alternativeName>
    <alternativeName>
        <fullName evidence="1">NDH-1 subunit N 1</fullName>
    </alternativeName>
</protein>
<feature type="chain" id="PRO_0000391235" description="NADH-quinone oxidoreductase subunit N 1">
    <location>
        <begin position="1"/>
        <end position="491"/>
    </location>
</feature>
<feature type="transmembrane region" description="Helical" evidence="1">
    <location>
        <begin position="9"/>
        <end position="29"/>
    </location>
</feature>
<feature type="transmembrane region" description="Helical" evidence="1">
    <location>
        <begin position="38"/>
        <end position="58"/>
    </location>
</feature>
<feature type="transmembrane region" description="Helical" evidence="1">
    <location>
        <begin position="76"/>
        <end position="96"/>
    </location>
</feature>
<feature type="transmembrane region" description="Helical" evidence="1">
    <location>
        <begin position="104"/>
        <end position="124"/>
    </location>
</feature>
<feature type="transmembrane region" description="Helical" evidence="1">
    <location>
        <begin position="126"/>
        <end position="146"/>
    </location>
</feature>
<feature type="transmembrane region" description="Helical" evidence="1">
    <location>
        <begin position="161"/>
        <end position="181"/>
    </location>
</feature>
<feature type="transmembrane region" description="Helical" evidence="1">
    <location>
        <begin position="211"/>
        <end position="231"/>
    </location>
</feature>
<feature type="transmembrane region" description="Helical" evidence="1">
    <location>
        <begin position="246"/>
        <end position="266"/>
    </location>
</feature>
<feature type="transmembrane region" description="Helical" evidence="1">
    <location>
        <begin position="276"/>
        <end position="296"/>
    </location>
</feature>
<feature type="transmembrane region" description="Helical" evidence="1">
    <location>
        <begin position="304"/>
        <end position="324"/>
    </location>
</feature>
<feature type="transmembrane region" description="Helical" evidence="1">
    <location>
        <begin position="329"/>
        <end position="349"/>
    </location>
</feature>
<feature type="transmembrane region" description="Helical" evidence="1">
    <location>
        <begin position="375"/>
        <end position="395"/>
    </location>
</feature>
<feature type="transmembrane region" description="Helical" evidence="1">
    <location>
        <begin position="410"/>
        <end position="432"/>
    </location>
</feature>
<feature type="transmembrane region" description="Helical" evidence="1">
    <location>
        <begin position="461"/>
        <end position="481"/>
    </location>
</feature>
<reference key="1">
    <citation type="journal article" date="2004" name="Nucleic Acids Res.">
        <title>Genome sequence of Symbiobacterium thermophilum, an uncultivable bacterium that depends on microbial commensalism.</title>
        <authorList>
            <person name="Ueda K."/>
            <person name="Yamashita A."/>
            <person name="Ishikawa J."/>
            <person name="Shimada M."/>
            <person name="Watsuji T."/>
            <person name="Morimura K."/>
            <person name="Ikeda H."/>
            <person name="Hattori M."/>
            <person name="Beppu T."/>
        </authorList>
    </citation>
    <scope>NUCLEOTIDE SEQUENCE [LARGE SCALE GENOMIC DNA]</scope>
    <source>
        <strain>DSM 24528 / JCM 14929 / IAM 14863 / T</strain>
    </source>
</reference>
<sequence>MPVDLNFTIAAPLLALAAGALLILLLDLLFRYETIQGPMYVAAVGAVLVAGWYLVPLWRGAAEPFGFHGMLVMDRFAAVYGLVLLGAALLAILLSFGRVREDQSGYLALLLWAAMGMVLLGGAGNLMVIFLGIELLSLALYVMIAFAPKRMAAREAAFKYFVLGSVAAAFLIFGFALIYGAAGTMSLTGIAAAARSFTSEGAWSVGLYYKVGVGLAIVGLAFKMALVPFHIWAPDVYQGAPTPVTAFMAIGTKAAAFAAMARLLVAAVPQAYQPSFLLPLSILAFASMMLGATVGIWQSDLKRLMAYSGIANAGYLIMAIPGLGLDGLSAAAYYLAAYGFATMGVFAVVRILEADGVDGSQLANLKGLFYRSPWVGVCLAVLFFGLIGVPPTGGFVGKFLLAIAAVRGGAWIVLTGLILSTGISAYVYLKVIGTAFTRTKVAPQPEEGEEPHPPTRTAAQVVLAIATAGTLVLGVLPGPVSELLRVALAGM</sequence>
<accession>Q67P10</accession>
<proteinExistence type="inferred from homology"/>
<dbReference type="EC" id="7.1.1.-" evidence="1"/>
<dbReference type="EMBL" id="AP006840">
    <property type="protein sequence ID" value="BAD40583.1"/>
    <property type="molecule type" value="Genomic_DNA"/>
</dbReference>
<dbReference type="RefSeq" id="WP_011195727.1">
    <property type="nucleotide sequence ID" value="NC_006177.1"/>
</dbReference>
<dbReference type="SMR" id="Q67P10"/>
<dbReference type="STRING" id="292459.STH1598"/>
<dbReference type="KEGG" id="sth:STH1598"/>
<dbReference type="eggNOG" id="COG1007">
    <property type="taxonomic scope" value="Bacteria"/>
</dbReference>
<dbReference type="HOGENOM" id="CLU_007100_1_5_9"/>
<dbReference type="OrthoDB" id="9807568at2"/>
<dbReference type="Proteomes" id="UP000000417">
    <property type="component" value="Chromosome"/>
</dbReference>
<dbReference type="GO" id="GO:0005886">
    <property type="term" value="C:plasma membrane"/>
    <property type="evidence" value="ECO:0007669"/>
    <property type="project" value="UniProtKB-SubCell"/>
</dbReference>
<dbReference type="GO" id="GO:0008137">
    <property type="term" value="F:NADH dehydrogenase (ubiquinone) activity"/>
    <property type="evidence" value="ECO:0007669"/>
    <property type="project" value="InterPro"/>
</dbReference>
<dbReference type="GO" id="GO:0050136">
    <property type="term" value="F:NADH:ubiquinone reductase (non-electrogenic) activity"/>
    <property type="evidence" value="ECO:0007669"/>
    <property type="project" value="UniProtKB-UniRule"/>
</dbReference>
<dbReference type="GO" id="GO:0048038">
    <property type="term" value="F:quinone binding"/>
    <property type="evidence" value="ECO:0007669"/>
    <property type="project" value="UniProtKB-KW"/>
</dbReference>
<dbReference type="GO" id="GO:0042773">
    <property type="term" value="P:ATP synthesis coupled electron transport"/>
    <property type="evidence" value="ECO:0007669"/>
    <property type="project" value="InterPro"/>
</dbReference>
<dbReference type="HAMAP" id="MF_00445">
    <property type="entry name" value="NDH1_NuoN_1"/>
    <property type="match status" value="1"/>
</dbReference>
<dbReference type="InterPro" id="IPR010096">
    <property type="entry name" value="NADH-Q_OxRdtase_suN/2"/>
</dbReference>
<dbReference type="InterPro" id="IPR001750">
    <property type="entry name" value="ND/Mrp_TM"/>
</dbReference>
<dbReference type="NCBIfam" id="TIGR01770">
    <property type="entry name" value="NDH_I_N"/>
    <property type="match status" value="1"/>
</dbReference>
<dbReference type="PANTHER" id="PTHR22773">
    <property type="entry name" value="NADH DEHYDROGENASE"/>
    <property type="match status" value="1"/>
</dbReference>
<dbReference type="Pfam" id="PF00361">
    <property type="entry name" value="Proton_antipo_M"/>
    <property type="match status" value="1"/>
</dbReference>
<evidence type="ECO:0000255" key="1">
    <source>
        <dbReference type="HAMAP-Rule" id="MF_00445"/>
    </source>
</evidence>
<keyword id="KW-1003">Cell membrane</keyword>
<keyword id="KW-0472">Membrane</keyword>
<keyword id="KW-0520">NAD</keyword>
<keyword id="KW-0874">Quinone</keyword>
<keyword id="KW-1185">Reference proteome</keyword>
<keyword id="KW-1278">Translocase</keyword>
<keyword id="KW-0812">Transmembrane</keyword>
<keyword id="KW-1133">Transmembrane helix</keyword>
<keyword id="KW-0813">Transport</keyword>
<name>NUON1_SYMTH</name>
<gene>
    <name evidence="1" type="primary">nuoN1</name>
    <name type="ordered locus">STH1598</name>
</gene>
<organism>
    <name type="scientific">Symbiobacterium thermophilum (strain DSM 24528 / JCM 14929 / IAM 14863 / T)</name>
    <dbReference type="NCBI Taxonomy" id="292459"/>
    <lineage>
        <taxon>Bacteria</taxon>
        <taxon>Bacillati</taxon>
        <taxon>Bacillota</taxon>
        <taxon>Clostridia</taxon>
        <taxon>Eubacteriales</taxon>
        <taxon>Symbiobacteriaceae</taxon>
        <taxon>Symbiobacterium</taxon>
    </lineage>
</organism>